<evidence type="ECO:0000255" key="1">
    <source>
        <dbReference type="HAMAP-Rule" id="MF_00649"/>
    </source>
</evidence>
<evidence type="ECO:0000256" key="2">
    <source>
        <dbReference type="SAM" id="MobiDB-lite"/>
    </source>
</evidence>
<keyword id="KW-0479">Metal-binding</keyword>
<keyword id="KW-0862">Zinc</keyword>
<dbReference type="EMBL" id="AE016795">
    <property type="protein sequence ID" value="AAO10038.2"/>
    <property type="molecule type" value="Genomic_DNA"/>
</dbReference>
<dbReference type="RefSeq" id="WP_011079545.1">
    <property type="nucleotide sequence ID" value="NC_004459.3"/>
</dbReference>
<dbReference type="SMR" id="Q8DC30"/>
<dbReference type="KEGG" id="vvu:VV1_1619"/>
<dbReference type="HOGENOM" id="CLU_178280_3_1_6"/>
<dbReference type="Proteomes" id="UP000002275">
    <property type="component" value="Chromosome 1"/>
</dbReference>
<dbReference type="GO" id="GO:0008657">
    <property type="term" value="F:DNA topoisomerase type II (double strand cut, ATP-hydrolyzing) inhibitor activity"/>
    <property type="evidence" value="ECO:0007669"/>
    <property type="project" value="UniProtKB-UniRule"/>
</dbReference>
<dbReference type="GO" id="GO:0008270">
    <property type="term" value="F:zinc ion binding"/>
    <property type="evidence" value="ECO:0007669"/>
    <property type="project" value="UniProtKB-UniRule"/>
</dbReference>
<dbReference type="GO" id="GO:0006355">
    <property type="term" value="P:regulation of DNA-templated transcription"/>
    <property type="evidence" value="ECO:0007669"/>
    <property type="project" value="InterPro"/>
</dbReference>
<dbReference type="Gene3D" id="3.30.50.10">
    <property type="entry name" value="Erythroid Transcription Factor GATA-1, subunit A"/>
    <property type="match status" value="1"/>
</dbReference>
<dbReference type="HAMAP" id="MF_00649">
    <property type="entry name" value="DNA_gyrase_inhibitor_YacG"/>
    <property type="match status" value="1"/>
</dbReference>
<dbReference type="InterPro" id="IPR005584">
    <property type="entry name" value="DNA_gyrase_inhibitor_YacG"/>
</dbReference>
<dbReference type="InterPro" id="IPR013088">
    <property type="entry name" value="Znf_NHR/GATA"/>
</dbReference>
<dbReference type="NCBIfam" id="NF001638">
    <property type="entry name" value="PRK00418.1"/>
    <property type="match status" value="1"/>
</dbReference>
<dbReference type="PANTHER" id="PTHR36150">
    <property type="entry name" value="DNA GYRASE INHIBITOR YACG"/>
    <property type="match status" value="1"/>
</dbReference>
<dbReference type="PANTHER" id="PTHR36150:SF1">
    <property type="entry name" value="DNA GYRASE INHIBITOR YACG"/>
    <property type="match status" value="1"/>
</dbReference>
<dbReference type="Pfam" id="PF03884">
    <property type="entry name" value="YacG"/>
    <property type="match status" value="1"/>
</dbReference>
<dbReference type="SUPFAM" id="SSF57716">
    <property type="entry name" value="Glucocorticoid receptor-like (DNA-binding domain)"/>
    <property type="match status" value="1"/>
</dbReference>
<comment type="function">
    <text evidence="1">Inhibits all the catalytic activities of DNA gyrase by preventing its interaction with DNA. Acts by binding directly to the C-terminal domain of GyrB, which probably disrupts DNA binding by the gyrase.</text>
</comment>
<comment type="cofactor">
    <cofactor evidence="1">
        <name>Zn(2+)</name>
        <dbReference type="ChEBI" id="CHEBI:29105"/>
    </cofactor>
    <text evidence="1">Binds 1 zinc ion.</text>
</comment>
<comment type="subunit">
    <text evidence="1">Interacts with GyrB.</text>
</comment>
<comment type="similarity">
    <text evidence="1">Belongs to the DNA gyrase inhibitor YacG family.</text>
</comment>
<gene>
    <name evidence="1" type="primary">yacG</name>
    <name type="ordered locus">VV1_1619</name>
</gene>
<organism>
    <name type="scientific">Vibrio vulnificus (strain CMCP6)</name>
    <dbReference type="NCBI Taxonomy" id="216895"/>
    <lineage>
        <taxon>Bacteria</taxon>
        <taxon>Pseudomonadati</taxon>
        <taxon>Pseudomonadota</taxon>
        <taxon>Gammaproteobacteria</taxon>
        <taxon>Vibrionales</taxon>
        <taxon>Vibrionaceae</taxon>
        <taxon>Vibrio</taxon>
    </lineage>
</organism>
<proteinExistence type="inferred from homology"/>
<accession>Q8DC30</accession>
<sequence length="64" mass="7240">MTKITIVKCPQCGTNVEWGEQSPHRPFCSKKCQMIDFGEWADEENAIPGAPDMSDSDGWSEEQY</sequence>
<feature type="chain" id="PRO_0000211731" description="DNA gyrase inhibitor YacG">
    <location>
        <begin position="1"/>
        <end position="64"/>
    </location>
</feature>
<feature type="region of interest" description="Disordered" evidence="2">
    <location>
        <begin position="42"/>
        <end position="64"/>
    </location>
</feature>
<feature type="compositionally biased region" description="Acidic residues" evidence="2">
    <location>
        <begin position="54"/>
        <end position="64"/>
    </location>
</feature>
<feature type="binding site" evidence="1">
    <location>
        <position position="9"/>
    </location>
    <ligand>
        <name>Zn(2+)</name>
        <dbReference type="ChEBI" id="CHEBI:29105"/>
    </ligand>
</feature>
<feature type="binding site" evidence="1">
    <location>
        <position position="12"/>
    </location>
    <ligand>
        <name>Zn(2+)</name>
        <dbReference type="ChEBI" id="CHEBI:29105"/>
    </ligand>
</feature>
<feature type="binding site" evidence="1">
    <location>
        <position position="28"/>
    </location>
    <ligand>
        <name>Zn(2+)</name>
        <dbReference type="ChEBI" id="CHEBI:29105"/>
    </ligand>
</feature>
<feature type="binding site" evidence="1">
    <location>
        <position position="32"/>
    </location>
    <ligand>
        <name>Zn(2+)</name>
        <dbReference type="ChEBI" id="CHEBI:29105"/>
    </ligand>
</feature>
<reference key="1">
    <citation type="submission" date="2002-12" db="EMBL/GenBank/DDBJ databases">
        <title>Complete genome sequence of Vibrio vulnificus CMCP6.</title>
        <authorList>
            <person name="Rhee J.H."/>
            <person name="Kim S.Y."/>
            <person name="Chung S.S."/>
            <person name="Kim J.J."/>
            <person name="Moon Y.H."/>
            <person name="Jeong H."/>
            <person name="Choy H.E."/>
        </authorList>
    </citation>
    <scope>NUCLEOTIDE SEQUENCE [LARGE SCALE GENOMIC DNA]</scope>
    <source>
        <strain>CMCP6</strain>
    </source>
</reference>
<protein>
    <recommendedName>
        <fullName evidence="1">DNA gyrase inhibitor YacG</fullName>
    </recommendedName>
</protein>
<name>YACG_VIBVU</name>